<name>WTF1_ARATH</name>
<dbReference type="EMBL" id="AF007269">
    <property type="protein sequence ID" value="AAB61038.1"/>
    <property type="status" value="ALT_SEQ"/>
    <property type="molecule type" value="Genomic_DNA"/>
</dbReference>
<dbReference type="EMBL" id="CP002687">
    <property type="protein sequence ID" value="AEE81971.1"/>
    <property type="molecule type" value="Genomic_DNA"/>
</dbReference>
<dbReference type="EMBL" id="DQ653402">
    <property type="protein sequence ID" value="ABK28304.1"/>
    <property type="molecule type" value="Genomic_DNA"/>
</dbReference>
<dbReference type="PIR" id="T01734">
    <property type="entry name" value="T01734"/>
</dbReference>
<dbReference type="FunCoup" id="A0MFS5">
    <property type="interactions" value="1063"/>
</dbReference>
<dbReference type="STRING" id="3702.A0MFS5"/>
<dbReference type="GlyGen" id="A0MFS5">
    <property type="glycosylation" value="1 site"/>
</dbReference>
<dbReference type="PaxDb" id="3702-AT4G01037.1"/>
<dbReference type="ProteomicsDB" id="242450"/>
<dbReference type="EnsemblPlants" id="AT4G01037.1">
    <property type="protein sequence ID" value="AT4G01037.1"/>
    <property type="gene ID" value="AT4G01037"/>
</dbReference>
<dbReference type="Gramene" id="AT4G01037.1">
    <property type="protein sequence ID" value="AT4G01037.1"/>
    <property type="gene ID" value="AT4G01037"/>
</dbReference>
<dbReference type="KEGG" id="ath:AT4G01037"/>
<dbReference type="Araport" id="AT4G01037"/>
<dbReference type="TAIR" id="AT4G01037">
    <property type="gene designation" value="WTF1"/>
</dbReference>
<dbReference type="eggNOG" id="ENOG502QRW0">
    <property type="taxonomic scope" value="Eukaryota"/>
</dbReference>
<dbReference type="HOGENOM" id="CLU_024287_4_1_1"/>
<dbReference type="InParanoid" id="A0MFS5"/>
<dbReference type="OMA" id="CAVIHEM"/>
<dbReference type="PhylomeDB" id="A0MFS5"/>
<dbReference type="PRO" id="PR:A0MFS5"/>
<dbReference type="Proteomes" id="UP000006548">
    <property type="component" value="Chromosome 4"/>
</dbReference>
<dbReference type="ExpressionAtlas" id="A0MFS5">
    <property type="expression patterns" value="baseline and differential"/>
</dbReference>
<dbReference type="GO" id="GO:0009507">
    <property type="term" value="C:chloroplast"/>
    <property type="evidence" value="ECO:0000314"/>
    <property type="project" value="TAIR"/>
</dbReference>
<dbReference type="GO" id="GO:0003729">
    <property type="term" value="F:mRNA binding"/>
    <property type="evidence" value="ECO:0000314"/>
    <property type="project" value="TAIR"/>
</dbReference>
<dbReference type="GO" id="GO:0003723">
    <property type="term" value="F:RNA binding"/>
    <property type="evidence" value="ECO:0000314"/>
    <property type="project" value="TAIR"/>
</dbReference>
<dbReference type="GO" id="GO:0000373">
    <property type="term" value="P:Group II intron splicing"/>
    <property type="evidence" value="ECO:0000315"/>
    <property type="project" value="TAIR"/>
</dbReference>
<dbReference type="GO" id="GO:0006397">
    <property type="term" value="P:mRNA processing"/>
    <property type="evidence" value="ECO:0007669"/>
    <property type="project" value="UniProtKB-KW"/>
</dbReference>
<dbReference type="GO" id="GO:0015979">
    <property type="term" value="P:photosynthesis"/>
    <property type="evidence" value="ECO:0000315"/>
    <property type="project" value="TAIR"/>
</dbReference>
<dbReference type="InterPro" id="IPR021099">
    <property type="entry name" value="PORR_domain"/>
</dbReference>
<dbReference type="InterPro" id="IPR045040">
    <property type="entry name" value="PORR_fam"/>
</dbReference>
<dbReference type="PANTHER" id="PTHR31476">
    <property type="entry name" value="PROTEIN WHAT'S THIS FACTOR 1 HOMOLOG, CHLOROPLASTIC"/>
    <property type="match status" value="1"/>
</dbReference>
<dbReference type="PANTHER" id="PTHR31476:SF4">
    <property type="entry name" value="PROTEIN WHAT'S THIS FACTOR 1 HOMOLOG, CHLOROPLASTIC"/>
    <property type="match status" value="1"/>
</dbReference>
<dbReference type="Pfam" id="PF11955">
    <property type="entry name" value="PORR"/>
    <property type="match status" value="1"/>
</dbReference>
<reference key="1">
    <citation type="journal article" date="1999" name="Nature">
        <title>Sequence and analysis of chromosome 4 of the plant Arabidopsis thaliana.</title>
        <authorList>
            <person name="Mayer K.F.X."/>
            <person name="Schueller C."/>
            <person name="Wambutt R."/>
            <person name="Murphy G."/>
            <person name="Volckaert G."/>
            <person name="Pohl T."/>
            <person name="Duesterhoeft A."/>
            <person name="Stiekema W."/>
            <person name="Entian K.-D."/>
            <person name="Terryn N."/>
            <person name="Harris B."/>
            <person name="Ansorge W."/>
            <person name="Brandt P."/>
            <person name="Grivell L.A."/>
            <person name="Rieger M."/>
            <person name="Weichselgartner M."/>
            <person name="de Simone V."/>
            <person name="Obermaier B."/>
            <person name="Mache R."/>
            <person name="Mueller M."/>
            <person name="Kreis M."/>
            <person name="Delseny M."/>
            <person name="Puigdomenech P."/>
            <person name="Watson M."/>
            <person name="Schmidtheini T."/>
            <person name="Reichert B."/>
            <person name="Portetelle D."/>
            <person name="Perez-Alonso M."/>
            <person name="Boutry M."/>
            <person name="Bancroft I."/>
            <person name="Vos P."/>
            <person name="Hoheisel J."/>
            <person name="Zimmermann W."/>
            <person name="Wedler H."/>
            <person name="Ridley P."/>
            <person name="Langham S.-A."/>
            <person name="McCullagh B."/>
            <person name="Bilham L."/>
            <person name="Robben J."/>
            <person name="van der Schueren J."/>
            <person name="Grymonprez B."/>
            <person name="Chuang Y.-J."/>
            <person name="Vandenbussche F."/>
            <person name="Braeken M."/>
            <person name="Weltjens I."/>
            <person name="Voet M."/>
            <person name="Bastiaens I."/>
            <person name="Aert R."/>
            <person name="Defoor E."/>
            <person name="Weitzenegger T."/>
            <person name="Bothe G."/>
            <person name="Ramsperger U."/>
            <person name="Hilbert H."/>
            <person name="Braun M."/>
            <person name="Holzer E."/>
            <person name="Brandt A."/>
            <person name="Peters S."/>
            <person name="van Staveren M."/>
            <person name="Dirkse W."/>
            <person name="Mooijman P."/>
            <person name="Klein Lankhorst R."/>
            <person name="Rose M."/>
            <person name="Hauf J."/>
            <person name="Koetter P."/>
            <person name="Berneiser S."/>
            <person name="Hempel S."/>
            <person name="Feldpausch M."/>
            <person name="Lamberth S."/>
            <person name="Van den Daele H."/>
            <person name="De Keyser A."/>
            <person name="Buysshaert C."/>
            <person name="Gielen J."/>
            <person name="Villarroel R."/>
            <person name="De Clercq R."/>
            <person name="van Montagu M."/>
            <person name="Rogers J."/>
            <person name="Cronin A."/>
            <person name="Quail M.A."/>
            <person name="Bray-Allen S."/>
            <person name="Clark L."/>
            <person name="Doggett J."/>
            <person name="Hall S."/>
            <person name="Kay M."/>
            <person name="Lennard N."/>
            <person name="McLay K."/>
            <person name="Mayes R."/>
            <person name="Pettett A."/>
            <person name="Rajandream M.A."/>
            <person name="Lyne M."/>
            <person name="Benes V."/>
            <person name="Rechmann S."/>
            <person name="Borkova D."/>
            <person name="Bloecker H."/>
            <person name="Scharfe M."/>
            <person name="Grimm M."/>
            <person name="Loehnert T.-H."/>
            <person name="Dose S."/>
            <person name="de Haan M."/>
            <person name="Maarse A.C."/>
            <person name="Schaefer M."/>
            <person name="Mueller-Auer S."/>
            <person name="Gabel C."/>
            <person name="Fuchs M."/>
            <person name="Fartmann B."/>
            <person name="Granderath K."/>
            <person name="Dauner D."/>
            <person name="Herzl A."/>
            <person name="Neumann S."/>
            <person name="Argiriou A."/>
            <person name="Vitale D."/>
            <person name="Liguori R."/>
            <person name="Piravandi E."/>
            <person name="Massenet O."/>
            <person name="Quigley F."/>
            <person name="Clabauld G."/>
            <person name="Muendlein A."/>
            <person name="Felber R."/>
            <person name="Schnabl S."/>
            <person name="Hiller R."/>
            <person name="Schmidt W."/>
            <person name="Lecharny A."/>
            <person name="Aubourg S."/>
            <person name="Chefdor F."/>
            <person name="Cooke R."/>
            <person name="Berger C."/>
            <person name="Monfort A."/>
            <person name="Casacuberta E."/>
            <person name="Gibbons T."/>
            <person name="Weber N."/>
            <person name="Vandenbol M."/>
            <person name="Bargues M."/>
            <person name="Terol J."/>
            <person name="Torres A."/>
            <person name="Perez-Perez A."/>
            <person name="Purnelle B."/>
            <person name="Bent E."/>
            <person name="Johnson S."/>
            <person name="Tacon D."/>
            <person name="Jesse T."/>
            <person name="Heijnen L."/>
            <person name="Schwarz S."/>
            <person name="Scholler P."/>
            <person name="Heber S."/>
            <person name="Francs P."/>
            <person name="Bielke C."/>
            <person name="Frishman D."/>
            <person name="Haase D."/>
            <person name="Lemcke K."/>
            <person name="Mewes H.-W."/>
            <person name="Stocker S."/>
            <person name="Zaccaria P."/>
            <person name="Bevan M."/>
            <person name="Wilson R.K."/>
            <person name="de la Bastide M."/>
            <person name="Habermann K."/>
            <person name="Parnell L."/>
            <person name="Dedhia N."/>
            <person name="Gnoj L."/>
            <person name="Schutz K."/>
            <person name="Huang E."/>
            <person name="Spiegel L."/>
            <person name="Sekhon M."/>
            <person name="Murray J."/>
            <person name="Sheet P."/>
            <person name="Cordes M."/>
            <person name="Abu-Threideh J."/>
            <person name="Stoneking T."/>
            <person name="Kalicki J."/>
            <person name="Graves T."/>
            <person name="Harmon G."/>
            <person name="Edwards J."/>
            <person name="Latreille P."/>
            <person name="Courtney L."/>
            <person name="Cloud J."/>
            <person name="Abbott A."/>
            <person name="Scott K."/>
            <person name="Johnson D."/>
            <person name="Minx P."/>
            <person name="Bentley D."/>
            <person name="Fulton B."/>
            <person name="Miller N."/>
            <person name="Greco T."/>
            <person name="Kemp K."/>
            <person name="Kramer J."/>
            <person name="Fulton L."/>
            <person name="Mardis E."/>
            <person name="Dante M."/>
            <person name="Pepin K."/>
            <person name="Hillier L.W."/>
            <person name="Nelson J."/>
            <person name="Spieth J."/>
            <person name="Ryan E."/>
            <person name="Andrews S."/>
            <person name="Geisel C."/>
            <person name="Layman D."/>
            <person name="Du H."/>
            <person name="Ali J."/>
            <person name="Berghoff A."/>
            <person name="Jones K."/>
            <person name="Drone K."/>
            <person name="Cotton M."/>
            <person name="Joshu C."/>
            <person name="Antonoiu B."/>
            <person name="Zidanic M."/>
            <person name="Strong C."/>
            <person name="Sun H."/>
            <person name="Lamar B."/>
            <person name="Yordan C."/>
            <person name="Ma P."/>
            <person name="Zhong J."/>
            <person name="Preston R."/>
            <person name="Vil D."/>
            <person name="Shekher M."/>
            <person name="Matero A."/>
            <person name="Shah R."/>
            <person name="Swaby I.K."/>
            <person name="O'Shaughnessy A."/>
            <person name="Rodriguez M."/>
            <person name="Hoffman J."/>
            <person name="Till S."/>
            <person name="Granat S."/>
            <person name="Shohdy N."/>
            <person name="Hasegawa A."/>
            <person name="Hameed A."/>
            <person name="Lodhi M."/>
            <person name="Johnson A."/>
            <person name="Chen E."/>
            <person name="Marra M.A."/>
            <person name="Martienssen R."/>
            <person name="McCombie W.R."/>
        </authorList>
    </citation>
    <scope>NUCLEOTIDE SEQUENCE [LARGE SCALE GENOMIC DNA]</scope>
    <source>
        <strain>cv. Columbia</strain>
    </source>
</reference>
<reference key="2">
    <citation type="journal article" date="2017" name="Plant J.">
        <title>Araport11: a complete reannotation of the Arabidopsis thaliana reference genome.</title>
        <authorList>
            <person name="Cheng C.Y."/>
            <person name="Krishnakumar V."/>
            <person name="Chan A.P."/>
            <person name="Thibaud-Nissen F."/>
            <person name="Schobel S."/>
            <person name="Town C.D."/>
        </authorList>
    </citation>
    <scope>GENOME REANNOTATION</scope>
    <source>
        <strain>cv. Columbia</strain>
    </source>
</reference>
<reference key="3">
    <citation type="journal article" date="2006" name="Plant Biotechnol. J.">
        <title>Simultaneous high-throughput recombinational cloning of open reading frames in closed and open configurations.</title>
        <authorList>
            <person name="Underwood B.A."/>
            <person name="Vanderhaeghen R."/>
            <person name="Whitford R."/>
            <person name="Town C.D."/>
            <person name="Hilson P."/>
        </authorList>
    </citation>
    <scope>NUCLEOTIDE SEQUENCE [LARGE SCALE GENOMIC DNA]</scope>
    <source>
        <strain>cv. Columbia</strain>
    </source>
</reference>
<accession>A0MFS5</accession>
<accession>O04624</accession>
<sequence>MEPKLLLSAHKPLFVSCNSPFNEKTKLSVKSGLPMSTIRAARSQFMGEGLILGNKYGFWSTSRKTRVVVEPVRAAVKRRKELTFDSVVQRDKKLKLVLNIRKILVSQPDRMMSLRGLGKYRRDLGLKKRRRFIALLRKYPGVFEIVEEGAYSLRFKMTSEAERLYLDEMRIRNELEDVLVVKLRKLVMMSIDKRILLEKISHLKTDLGLPLEFRDTICQRYPQYFRVVPTPRGPALELTHWDPELAVSAAELSEDDNRTRESEERNLIIDRPPKFNRVKLPRGLNLSKSETRKISQFRDMQYISPYKDFSHLRSGTLEKEKHACGVIHELLSLTTEKRTLVDHLTHFREEFRFSQQLRGMLIRHPDLFYVSLKGERDSVFLREAYRNSELIDKDPLTLVKEKMRALVSVPRFPRRGGPRKDEEGREVEIDGSDADGEEEEEESDAEEWSDVDGYLEGEDGGNDDDGDWTDDEGEEDVPPNFDDDDEDEEEDSVKIGLSPSSRKSSSPRKKEEKVLTPVFPDGTPREKW</sequence>
<protein>
    <recommendedName>
        <fullName evidence="4">Protein WHAT'S THIS FACTOR 1 homolog, chloroplastic</fullName>
    </recommendedName>
</protein>
<evidence type="ECO:0000250" key="1">
    <source>
        <dbReference type="UniProtKB" id="B6TTV8"/>
    </source>
</evidence>
<evidence type="ECO:0000255" key="2"/>
<evidence type="ECO:0000256" key="3">
    <source>
        <dbReference type="SAM" id="MobiDB-lite"/>
    </source>
</evidence>
<evidence type="ECO:0000305" key="4"/>
<evidence type="ECO:0000312" key="5">
    <source>
        <dbReference type="Araport" id="AT4G01037"/>
    </source>
</evidence>
<evidence type="ECO:0000312" key="6">
    <source>
        <dbReference type="EMBL" id="AAB61038.1"/>
    </source>
</evidence>
<feature type="transit peptide" description="Chloroplast" evidence="2">
    <location>
        <begin position="1"/>
        <end position="73"/>
    </location>
</feature>
<feature type="chain" id="PRO_0000441883" description="Protein WHAT'S THIS FACTOR 1 homolog, chloroplastic">
    <location>
        <begin position="74"/>
        <end position="528"/>
    </location>
</feature>
<feature type="domain" description="PORR" evidence="2">
    <location>
        <begin position="80"/>
        <end position="408"/>
    </location>
</feature>
<feature type="region of interest" description="Disordered" evidence="3">
    <location>
        <begin position="410"/>
        <end position="528"/>
    </location>
</feature>
<feature type="compositionally biased region" description="Basic and acidic residues" evidence="3">
    <location>
        <begin position="418"/>
        <end position="428"/>
    </location>
</feature>
<feature type="compositionally biased region" description="Acidic residues" evidence="3">
    <location>
        <begin position="429"/>
        <end position="491"/>
    </location>
</feature>
<gene>
    <name evidence="5" type="ordered locus">At4g01037</name>
    <name evidence="6" type="ORF">A_IG002N01.30</name>
</gene>
<organism>
    <name type="scientific">Arabidopsis thaliana</name>
    <name type="common">Mouse-ear cress</name>
    <dbReference type="NCBI Taxonomy" id="3702"/>
    <lineage>
        <taxon>Eukaryota</taxon>
        <taxon>Viridiplantae</taxon>
        <taxon>Streptophyta</taxon>
        <taxon>Embryophyta</taxon>
        <taxon>Tracheophyta</taxon>
        <taxon>Spermatophyta</taxon>
        <taxon>Magnoliopsida</taxon>
        <taxon>eudicotyledons</taxon>
        <taxon>Gunneridae</taxon>
        <taxon>Pentapetalae</taxon>
        <taxon>rosids</taxon>
        <taxon>malvids</taxon>
        <taxon>Brassicales</taxon>
        <taxon>Brassicaceae</taxon>
        <taxon>Camelineae</taxon>
        <taxon>Arabidopsis</taxon>
    </lineage>
</organism>
<proteinExistence type="inferred from homology"/>
<comment type="function">
    <text evidence="1">RNA-binding protein involved in group II intron splicing. Binds specific group II introns and promotes their splicing. Functions in the context of a heterodimer with the ribonuclease III domain-containing protein RNC1.</text>
</comment>
<comment type="subcellular location">
    <subcellularLocation>
        <location evidence="2">Plastid</location>
        <location evidence="2">Chloroplast</location>
    </subcellularLocation>
</comment>
<comment type="sequence caution" evidence="4">
    <conflict type="erroneous gene model prediction">
        <sequence resource="EMBL-CDS" id="AAB61038"/>
    </conflict>
</comment>
<keyword id="KW-0150">Chloroplast</keyword>
<keyword id="KW-0507">mRNA processing</keyword>
<keyword id="KW-0508">mRNA splicing</keyword>
<keyword id="KW-0934">Plastid</keyword>
<keyword id="KW-1185">Reference proteome</keyword>
<keyword id="KW-0694">RNA-binding</keyword>
<keyword id="KW-0809">Transit peptide</keyword>